<organism>
    <name type="scientific">Haemophilus influenzae (strain ATCC 51907 / DSM 11121 / KW20 / Rd)</name>
    <dbReference type="NCBI Taxonomy" id="71421"/>
    <lineage>
        <taxon>Bacteria</taxon>
        <taxon>Pseudomonadati</taxon>
        <taxon>Pseudomonadota</taxon>
        <taxon>Gammaproteobacteria</taxon>
        <taxon>Pasteurellales</taxon>
        <taxon>Pasteurellaceae</taxon>
        <taxon>Haemophilus</taxon>
    </lineage>
</organism>
<keyword id="KW-0067">ATP-binding</keyword>
<keyword id="KW-0963">Cytoplasm</keyword>
<keyword id="KW-0315">Glutamine amidotransferase</keyword>
<keyword id="KW-0436">Ligase</keyword>
<keyword id="KW-0460">Magnesium</keyword>
<keyword id="KW-0479">Metal-binding</keyword>
<keyword id="KW-0547">Nucleotide-binding</keyword>
<keyword id="KW-0658">Purine biosynthesis</keyword>
<keyword id="KW-1185">Reference proteome</keyword>
<name>PUR4_HAEIN</name>
<gene>
    <name evidence="1" type="primary">purL</name>
    <name type="ordered locus">HI_0752</name>
</gene>
<proteinExistence type="inferred from homology"/>
<reference key="1">
    <citation type="journal article" date="1995" name="Science">
        <title>Whole-genome random sequencing and assembly of Haemophilus influenzae Rd.</title>
        <authorList>
            <person name="Fleischmann R.D."/>
            <person name="Adams M.D."/>
            <person name="White O."/>
            <person name="Clayton R.A."/>
            <person name="Kirkness E.F."/>
            <person name="Kerlavage A.R."/>
            <person name="Bult C.J."/>
            <person name="Tomb J.-F."/>
            <person name="Dougherty B.A."/>
            <person name="Merrick J.M."/>
            <person name="McKenney K."/>
            <person name="Sutton G.G."/>
            <person name="FitzHugh W."/>
            <person name="Fields C.A."/>
            <person name="Gocayne J.D."/>
            <person name="Scott J.D."/>
            <person name="Shirley R."/>
            <person name="Liu L.-I."/>
            <person name="Glodek A."/>
            <person name="Kelley J.M."/>
            <person name="Weidman J.F."/>
            <person name="Phillips C.A."/>
            <person name="Spriggs T."/>
            <person name="Hedblom E."/>
            <person name="Cotton M.D."/>
            <person name="Utterback T.R."/>
            <person name="Hanna M.C."/>
            <person name="Nguyen D.T."/>
            <person name="Saudek D.M."/>
            <person name="Brandon R.C."/>
            <person name="Fine L.D."/>
            <person name="Fritchman J.L."/>
            <person name="Fuhrmann J.L."/>
            <person name="Geoghagen N.S.M."/>
            <person name="Gnehm C.L."/>
            <person name="McDonald L.A."/>
            <person name="Small K.V."/>
            <person name="Fraser C.M."/>
            <person name="Smith H.O."/>
            <person name="Venter J.C."/>
        </authorList>
    </citation>
    <scope>NUCLEOTIDE SEQUENCE [LARGE SCALE GENOMIC DNA]</scope>
    <source>
        <strain>ATCC 51907 / DSM 11121 / KW20 / Rd</strain>
    </source>
</reference>
<dbReference type="EC" id="6.3.5.3" evidence="1"/>
<dbReference type="EMBL" id="L42023">
    <property type="protein sequence ID" value="AAC22411.1"/>
    <property type="status" value="ALT_INIT"/>
    <property type="molecule type" value="Genomic_DNA"/>
</dbReference>
<dbReference type="PIR" id="H64090">
    <property type="entry name" value="H64090"/>
</dbReference>
<dbReference type="RefSeq" id="NP_438911.1">
    <property type="nucleotide sequence ID" value="NC_000907.1"/>
</dbReference>
<dbReference type="SMR" id="P43847"/>
<dbReference type="STRING" id="71421.HI_0752"/>
<dbReference type="EnsemblBacteria" id="AAC22411">
    <property type="protein sequence ID" value="AAC22411"/>
    <property type="gene ID" value="HI_0752"/>
</dbReference>
<dbReference type="KEGG" id="hin:HI_0752"/>
<dbReference type="PATRIC" id="fig|71421.8.peg.790"/>
<dbReference type="eggNOG" id="COG0046">
    <property type="taxonomic scope" value="Bacteria"/>
</dbReference>
<dbReference type="eggNOG" id="COG0047">
    <property type="taxonomic scope" value="Bacteria"/>
</dbReference>
<dbReference type="HOGENOM" id="CLU_001031_0_2_6"/>
<dbReference type="OrthoDB" id="9804441at2"/>
<dbReference type="PhylomeDB" id="P43847"/>
<dbReference type="UniPathway" id="UPA00074">
    <property type="reaction ID" value="UER00128"/>
</dbReference>
<dbReference type="Proteomes" id="UP000000579">
    <property type="component" value="Chromosome"/>
</dbReference>
<dbReference type="GO" id="GO:0005737">
    <property type="term" value="C:cytoplasm"/>
    <property type="evidence" value="ECO:0000318"/>
    <property type="project" value="GO_Central"/>
</dbReference>
<dbReference type="GO" id="GO:0005524">
    <property type="term" value="F:ATP binding"/>
    <property type="evidence" value="ECO:0007669"/>
    <property type="project" value="UniProtKB-UniRule"/>
</dbReference>
<dbReference type="GO" id="GO:0046872">
    <property type="term" value="F:metal ion binding"/>
    <property type="evidence" value="ECO:0007669"/>
    <property type="project" value="UniProtKB-KW"/>
</dbReference>
<dbReference type="GO" id="GO:0004642">
    <property type="term" value="F:phosphoribosylformylglycinamidine synthase activity"/>
    <property type="evidence" value="ECO:0000318"/>
    <property type="project" value="GO_Central"/>
</dbReference>
<dbReference type="GO" id="GO:0006189">
    <property type="term" value="P:'de novo' IMP biosynthetic process"/>
    <property type="evidence" value="ECO:0007669"/>
    <property type="project" value="UniProtKB-UniRule"/>
</dbReference>
<dbReference type="GO" id="GO:0006164">
    <property type="term" value="P:purine nucleotide biosynthetic process"/>
    <property type="evidence" value="ECO:0000318"/>
    <property type="project" value="GO_Central"/>
</dbReference>
<dbReference type="CDD" id="cd01740">
    <property type="entry name" value="GATase1_FGAR_AT"/>
    <property type="match status" value="1"/>
</dbReference>
<dbReference type="CDD" id="cd02203">
    <property type="entry name" value="PurL_repeat1"/>
    <property type="match status" value="1"/>
</dbReference>
<dbReference type="FunFam" id="1.10.8.750:FF:000002">
    <property type="entry name" value="Phosphoribosylformylglycinamidine synthase"/>
    <property type="match status" value="1"/>
</dbReference>
<dbReference type="FunFam" id="3.30.1330.10:FF:000002">
    <property type="entry name" value="Phosphoribosylformylglycinamidine synthase"/>
    <property type="match status" value="1"/>
</dbReference>
<dbReference type="FunFam" id="3.30.1330.10:FF:000005">
    <property type="entry name" value="Phosphoribosylformylglycinamidine synthase"/>
    <property type="match status" value="1"/>
</dbReference>
<dbReference type="FunFam" id="3.40.50.880:FF:000008">
    <property type="entry name" value="Phosphoribosylformylglycinamidine synthase"/>
    <property type="match status" value="1"/>
</dbReference>
<dbReference type="FunFam" id="3.90.650.10:FF:000002">
    <property type="entry name" value="Phosphoribosylformylglycinamidine synthase"/>
    <property type="match status" value="1"/>
</dbReference>
<dbReference type="FunFam" id="3.90.650.10:FF:000005">
    <property type="entry name" value="Phosphoribosylformylglycinamidine synthase"/>
    <property type="match status" value="1"/>
</dbReference>
<dbReference type="Gene3D" id="3.40.50.880">
    <property type="match status" value="1"/>
</dbReference>
<dbReference type="Gene3D" id="1.10.8.750">
    <property type="entry name" value="Phosphoribosylformylglycinamidine synthase, linker domain"/>
    <property type="match status" value="1"/>
</dbReference>
<dbReference type="Gene3D" id="3.90.650.10">
    <property type="entry name" value="PurM-like C-terminal domain"/>
    <property type="match status" value="2"/>
</dbReference>
<dbReference type="Gene3D" id="3.30.1330.10">
    <property type="entry name" value="PurM-like, N-terminal domain"/>
    <property type="match status" value="2"/>
</dbReference>
<dbReference type="HAMAP" id="MF_00419">
    <property type="entry name" value="PurL_1"/>
    <property type="match status" value="1"/>
</dbReference>
<dbReference type="InterPro" id="IPR029062">
    <property type="entry name" value="Class_I_gatase-like"/>
</dbReference>
<dbReference type="InterPro" id="IPR040707">
    <property type="entry name" value="FGAR-AT_N"/>
</dbReference>
<dbReference type="InterPro" id="IPR055181">
    <property type="entry name" value="FGAR-AT_PurM_N-like"/>
</dbReference>
<dbReference type="InterPro" id="IPR010073">
    <property type="entry name" value="PurL_large"/>
</dbReference>
<dbReference type="InterPro" id="IPR041609">
    <property type="entry name" value="PurL_linker"/>
</dbReference>
<dbReference type="InterPro" id="IPR010918">
    <property type="entry name" value="PurM-like_C_dom"/>
</dbReference>
<dbReference type="InterPro" id="IPR036676">
    <property type="entry name" value="PurM-like_C_sf"/>
</dbReference>
<dbReference type="InterPro" id="IPR036921">
    <property type="entry name" value="PurM-like_N_sf"/>
</dbReference>
<dbReference type="InterPro" id="IPR036604">
    <property type="entry name" value="PurS-like_sf"/>
</dbReference>
<dbReference type="NCBIfam" id="TIGR01735">
    <property type="entry name" value="FGAM_synt"/>
    <property type="match status" value="1"/>
</dbReference>
<dbReference type="NCBIfam" id="NF003672">
    <property type="entry name" value="PRK05297.1"/>
    <property type="match status" value="1"/>
</dbReference>
<dbReference type="PANTHER" id="PTHR10099">
    <property type="entry name" value="PHOSPHORIBOSYLFORMYLGLYCINAMIDINE SYNTHASE"/>
    <property type="match status" value="1"/>
</dbReference>
<dbReference type="PANTHER" id="PTHR10099:SF1">
    <property type="entry name" value="PHOSPHORIBOSYLFORMYLGLYCINAMIDINE SYNTHASE"/>
    <property type="match status" value="1"/>
</dbReference>
<dbReference type="Pfam" id="PF02769">
    <property type="entry name" value="AIRS_C"/>
    <property type="match status" value="2"/>
</dbReference>
<dbReference type="Pfam" id="PF18072">
    <property type="entry name" value="FGAR-AT_linker"/>
    <property type="match status" value="1"/>
</dbReference>
<dbReference type="Pfam" id="PF18076">
    <property type="entry name" value="FGAR-AT_N"/>
    <property type="match status" value="1"/>
</dbReference>
<dbReference type="Pfam" id="PF22689">
    <property type="entry name" value="FGAR-AT_PurM_N-like"/>
    <property type="match status" value="1"/>
</dbReference>
<dbReference type="Pfam" id="PF13507">
    <property type="entry name" value="GATase_5"/>
    <property type="match status" value="1"/>
</dbReference>
<dbReference type="SMART" id="SM01211">
    <property type="entry name" value="GATase_5"/>
    <property type="match status" value="1"/>
</dbReference>
<dbReference type="SUPFAM" id="SSF52317">
    <property type="entry name" value="Class I glutamine amidotransferase-like"/>
    <property type="match status" value="1"/>
</dbReference>
<dbReference type="SUPFAM" id="SSF109736">
    <property type="entry name" value="FGAM synthase PurL, linker domain"/>
    <property type="match status" value="1"/>
</dbReference>
<dbReference type="SUPFAM" id="SSF56042">
    <property type="entry name" value="PurM C-terminal domain-like"/>
    <property type="match status" value="2"/>
</dbReference>
<dbReference type="SUPFAM" id="SSF55326">
    <property type="entry name" value="PurM N-terminal domain-like"/>
    <property type="match status" value="2"/>
</dbReference>
<dbReference type="SUPFAM" id="SSF82697">
    <property type="entry name" value="PurS-like"/>
    <property type="match status" value="1"/>
</dbReference>
<dbReference type="PROSITE" id="PS51273">
    <property type="entry name" value="GATASE_TYPE_1"/>
    <property type="match status" value="1"/>
</dbReference>
<feature type="chain" id="PRO_0000100409" description="Phosphoribosylformylglycinamidine synthase">
    <location>
        <begin position="1"/>
        <end position="1297"/>
    </location>
</feature>
<feature type="domain" description="Glutamine amidotransferase type-1" evidence="1">
    <location>
        <begin position="1045"/>
        <end position="1297"/>
    </location>
</feature>
<feature type="region of interest" description="Disordered" evidence="2">
    <location>
        <begin position="301"/>
        <end position="329"/>
    </location>
</feature>
<feature type="active site" description="Nucleophile" evidence="1">
    <location>
        <position position="1138"/>
    </location>
</feature>
<feature type="active site" evidence="1">
    <location>
        <position position="1263"/>
    </location>
</feature>
<feature type="active site" evidence="1">
    <location>
        <position position="1265"/>
    </location>
</feature>
<feature type="binding site" evidence="1">
    <location>
        <begin position="308"/>
        <end position="319"/>
    </location>
    <ligand>
        <name>ATP</name>
        <dbReference type="ChEBI" id="CHEBI:30616"/>
    </ligand>
</feature>
<feature type="binding site" evidence="1">
    <location>
        <position position="680"/>
    </location>
    <ligand>
        <name>Mg(2+)</name>
        <dbReference type="ChEBI" id="CHEBI:18420"/>
    </ligand>
</feature>
<feature type="binding site" evidence="1">
    <location>
        <position position="719"/>
    </location>
    <ligand>
        <name>Mg(2+)</name>
        <dbReference type="ChEBI" id="CHEBI:18420"/>
    </ligand>
</feature>
<feature type="binding site" evidence="1">
    <location>
        <position position="723"/>
    </location>
    <ligand>
        <name>Mg(2+)</name>
        <dbReference type="ChEBI" id="CHEBI:18420"/>
    </ligand>
</feature>
<feature type="binding site" evidence="1">
    <location>
        <position position="887"/>
    </location>
    <ligand>
        <name>Mg(2+)</name>
        <dbReference type="ChEBI" id="CHEBI:18420"/>
    </ligand>
</feature>
<feature type="binding site" evidence="1">
    <location>
        <position position="889"/>
    </location>
    <ligand>
        <name>ATP</name>
        <dbReference type="ChEBI" id="CHEBI:30616"/>
    </ligand>
</feature>
<sequence length="1297" mass="142747">MTVKTFRGSPALSEFRLTQLQQKCQQYQLPITSVYAEYLHFVEQKTSLVEDEIVKLQALLHYGSMFSELKPAGYCLIVTPRVGTISSWSSKATDIAHNCGLSKVNRIERGIAYYFNIERDLTEAELATLKDLLHDRMLETVLNHETEAALLFTQQEPKALTTIDILNGGRQALEQANIALGLALADDEMDYLVESFTALKRNPQDVELYMFAQANSEHCRHKIFNADWIIDGKKQDKSLFKMIKNTFEQTPDFVLSAYKDNAAVMEGSKVGRWFPDPDGQYRVHQEDVHILMKVETHNHPTAISPFPGAATGSGGEIRDEGATGRGAKPKAGLTGFSVSNLVIPNFEQPWENPLSKPNRIASALDIMIDAPLGSAAFNNEFGRPALLGYFRTYEEKVNSFAGKEVRGYHKPIMLAGGIGNIRGEQVQKGEIPIGAKLIVLGGAAMNIGLGGGAASSMDSGKSKEDLDFASVQRENPEMERRCQEVIDRCWQLGEENPILFIHDVGAGGLSNAMPELVHDGKRGGKFDLRSILCDEKGMSPLEIWCNESQERYVLAVAPENLELFTALCERERAPFAVIGEATQAEHLILHDSHFDNNPIDLPMNVLLGKTPKMTREVLSKTVENQSLKIESIQLKEAFHRVLRLPVVAEKTFLITIGDRSVTGMVARDQMVGPWQIPVSDVAVTTASLDSYHGEAMAIGERSPVALLDFSASARLAVAEAITNIAGTLIGEMKRIKLSANWMSAAGHTGEDAGLYEAVKAVGEELCPALGLTIPVGKDSMSMKTTWIDNGEQKSVTAPLSLVISAFARVEDVRKTLTPQLRTDKGFSSLLLIDLGEGHNRLGATALAQVYKQLGDKPADVVKVQRLKDFYNAMQTLVAEDKLLAYHDRSDGGLITTLAEMAFAGHCGVEVDISALGDNDLAVLFNEELGAVIQVADSQLESVREVLKAHNLLGIIHQLGTVTADDRFEISRGSHKLFSEKRSELRSIWAELTYQMQRLRDNPECAEQEFEAKKNPDDKGLSAFLTYDVNEDITAPFINKGVKPTIAILREQGVNSHYEMAAAFDRAGFNAIDVHMSDLMIGRRNLAEFNAMVACGGFSYGDVLGAGGGWAKSILFNPKLHEQFSQFFINPNTLTLGVCNGCQMISNLAEIIPGTENWPHFVRNKSERFEARVSLVKINEVDSVWFAGMAGSHMPIAVSHGEGQVKFKSVEQFAGLKAQGIIAAQYIDNNGSPTELYPANPNGSSEGITAITNLDGRVAIMMPHPERVFRAVSNSWHPENWTEDGAWMRLFRNARMVF</sequence>
<comment type="function">
    <text evidence="1">Phosphoribosylformylglycinamidine synthase involved in the purines biosynthetic pathway. Catalyzes the ATP-dependent conversion of formylglycinamide ribonucleotide (FGAR) and glutamine to yield formylglycinamidine ribonucleotide (FGAM) and glutamate.</text>
</comment>
<comment type="catalytic activity">
    <reaction evidence="1">
        <text>N(2)-formyl-N(1)-(5-phospho-beta-D-ribosyl)glycinamide + L-glutamine + ATP + H2O = 2-formamido-N(1)-(5-O-phospho-beta-D-ribosyl)acetamidine + L-glutamate + ADP + phosphate + H(+)</text>
        <dbReference type="Rhea" id="RHEA:17129"/>
        <dbReference type="ChEBI" id="CHEBI:15377"/>
        <dbReference type="ChEBI" id="CHEBI:15378"/>
        <dbReference type="ChEBI" id="CHEBI:29985"/>
        <dbReference type="ChEBI" id="CHEBI:30616"/>
        <dbReference type="ChEBI" id="CHEBI:43474"/>
        <dbReference type="ChEBI" id="CHEBI:58359"/>
        <dbReference type="ChEBI" id="CHEBI:147286"/>
        <dbReference type="ChEBI" id="CHEBI:147287"/>
        <dbReference type="ChEBI" id="CHEBI:456216"/>
        <dbReference type="EC" id="6.3.5.3"/>
    </reaction>
</comment>
<comment type="pathway">
    <text evidence="1">Purine metabolism; IMP biosynthesis via de novo pathway; 5-amino-1-(5-phospho-D-ribosyl)imidazole from N(2)-formyl-N(1)-(5-phospho-D-ribosyl)glycinamide: step 1/2.</text>
</comment>
<comment type="subunit">
    <text evidence="1">Monomer.</text>
</comment>
<comment type="subcellular location">
    <subcellularLocation>
        <location evidence="1">Cytoplasm</location>
    </subcellularLocation>
</comment>
<comment type="similarity">
    <text evidence="1">In the N-terminal section; belongs to the FGAMS family.</text>
</comment>
<comment type="sequence caution" evidence="3">
    <conflict type="erroneous initiation">
        <sequence resource="EMBL-CDS" id="AAC22411"/>
    </conflict>
    <text>Extended N-terminus.</text>
</comment>
<protein>
    <recommendedName>
        <fullName evidence="1">Phosphoribosylformylglycinamidine synthase</fullName>
        <shortName evidence="1">FGAM synthase</shortName>
        <shortName evidence="1">FGAMS</shortName>
        <ecNumber evidence="1">6.3.5.3</ecNumber>
    </recommendedName>
    <alternativeName>
        <fullName evidence="1">Formylglycinamide ribonucleotide amidotransferase</fullName>
        <shortName evidence="1">FGAR amidotransferase</shortName>
        <shortName evidence="1">FGAR-AT</shortName>
    </alternativeName>
</protein>
<accession>P43847</accession>
<evidence type="ECO:0000255" key="1">
    <source>
        <dbReference type="HAMAP-Rule" id="MF_00419"/>
    </source>
</evidence>
<evidence type="ECO:0000256" key="2">
    <source>
        <dbReference type="SAM" id="MobiDB-lite"/>
    </source>
</evidence>
<evidence type="ECO:0000305" key="3"/>